<comment type="function">
    <molecule>CLE9p</molecule>
    <text evidence="6 7 8 9">Extracellular signal peptide that regulates cell fate. Represses root apical meristem maintenance. Regulates the transition of protophloem cells from proliferation to differentiation, thus impinging on postembryonic growth capacity of the root meristem; this signaling pathway requires CRN and CLV2 (PubMed:28607033).</text>
</comment>
<comment type="subcellular location">
    <molecule>CLE9p</molecule>
    <subcellularLocation>
        <location evidence="5">Secreted</location>
        <location evidence="5">Extracellular space</location>
    </subcellularLocation>
</comment>
<comment type="tissue specificity">
    <molecule>CLE9p</molecule>
    <text evidence="5">Mostly expressed in leaves, flowers, stems and apex, and, to a lower extent, in seedlings, roots, siliques and pollen.</text>
</comment>
<comment type="PTM">
    <molecule>CLE9p</molecule>
    <text evidence="1">The O-glycosylation (arabinosylation) of the hydroxyproline Pro-115 enhances binding affinity of the CLE9p peptide for its receptor.</text>
</comment>
<comment type="similarity">
    <text evidence="11">Belongs to the CLV3/ESR signal peptide family.</text>
</comment>
<comment type="sequence caution" evidence="11">
    <conflict type="erroneous initiation">
        <sequence resource="EMBL-CDS" id="AAF98585"/>
    </conflict>
    <text>Truncated N-terminus.</text>
</comment>
<dbReference type="EMBL" id="AC013427">
    <property type="protein sequence ID" value="AAF98585.1"/>
    <property type="status" value="ALT_INIT"/>
    <property type="molecule type" value="Genomic_DNA"/>
</dbReference>
<dbReference type="EMBL" id="CP002684">
    <property type="protein sequence ID" value="AEE30708.1"/>
    <property type="molecule type" value="Genomic_DNA"/>
</dbReference>
<dbReference type="EMBL" id="AY086355">
    <property type="protein sequence ID" value="AAM64423.1"/>
    <property type="molecule type" value="mRNA"/>
</dbReference>
<dbReference type="PIR" id="B86393">
    <property type="entry name" value="B86393"/>
</dbReference>
<dbReference type="RefSeq" id="NP_564251.1">
    <property type="nucleotide sequence ID" value="NM_102422.3"/>
</dbReference>
<dbReference type="PDB" id="7OGU">
    <property type="method" value="X-ray"/>
    <property type="resolution" value="2.87 A"/>
    <property type="chains" value="CCC/FFF/III/LLL=109-120"/>
</dbReference>
<dbReference type="PDBsum" id="7OGU"/>
<dbReference type="SMR" id="Q9FZE4"/>
<dbReference type="STRING" id="3702.Q9FZE4"/>
<dbReference type="GlyCosmos" id="Q9FZE4">
    <property type="glycosylation" value="2 sites, No reported glycans"/>
</dbReference>
<dbReference type="GlyGen" id="Q9FZE4">
    <property type="glycosylation" value="1 site"/>
</dbReference>
<dbReference type="PaxDb" id="3702-AT1G26600.1"/>
<dbReference type="EnsemblPlants" id="AT1G26600.1">
    <property type="protein sequence ID" value="AT1G26600.1"/>
    <property type="gene ID" value="AT1G26600"/>
</dbReference>
<dbReference type="GeneID" id="839200"/>
<dbReference type="Gramene" id="AT1G26600.1">
    <property type="protein sequence ID" value="AT1G26600.1"/>
    <property type="gene ID" value="AT1G26600"/>
</dbReference>
<dbReference type="KEGG" id="ath:AT1G26600"/>
<dbReference type="Araport" id="AT1G26600"/>
<dbReference type="TAIR" id="AT1G26600">
    <property type="gene designation" value="CLE9"/>
</dbReference>
<dbReference type="eggNOG" id="ENOG502S9T8">
    <property type="taxonomic scope" value="Eukaryota"/>
</dbReference>
<dbReference type="HOGENOM" id="CLU_169217_0_0_1"/>
<dbReference type="InParanoid" id="Q9FZE4"/>
<dbReference type="OMA" id="EISYSHH"/>
<dbReference type="OrthoDB" id="753861at2759"/>
<dbReference type="PhylomeDB" id="Q9FZE4"/>
<dbReference type="PRO" id="PR:Q9FZE4"/>
<dbReference type="Proteomes" id="UP000006548">
    <property type="component" value="Chromosome 1"/>
</dbReference>
<dbReference type="ExpressionAtlas" id="Q9FZE4">
    <property type="expression patterns" value="baseline and differential"/>
</dbReference>
<dbReference type="GO" id="GO:0048046">
    <property type="term" value="C:apoplast"/>
    <property type="evidence" value="ECO:0000255"/>
    <property type="project" value="TAIR"/>
</dbReference>
<dbReference type="GO" id="GO:0045168">
    <property type="term" value="P:cell-cell signaling involved in cell fate commitment"/>
    <property type="evidence" value="ECO:0000250"/>
    <property type="project" value="UniProtKB"/>
</dbReference>
<dbReference type="GO" id="GO:0010078">
    <property type="term" value="P:maintenance of root meristem identity"/>
    <property type="evidence" value="ECO:0000314"/>
    <property type="project" value="UniProtKB"/>
</dbReference>
<dbReference type="GO" id="GO:0010088">
    <property type="term" value="P:phloem development"/>
    <property type="evidence" value="ECO:0000314"/>
    <property type="project" value="UniProtKB"/>
</dbReference>
<dbReference type="GO" id="GO:0045595">
    <property type="term" value="P:regulation of cell differentiation"/>
    <property type="evidence" value="ECO:0000314"/>
    <property type="project" value="UniProtKB"/>
</dbReference>
<dbReference type="InterPro" id="IPR039618">
    <property type="entry name" value="CLE9-13"/>
</dbReference>
<dbReference type="PANTHER" id="PTHR34359">
    <property type="entry name" value="CLAVATA3/ESR (CLE)-RELATED PROTEIN 10"/>
    <property type="match status" value="1"/>
</dbReference>
<dbReference type="PANTHER" id="PTHR34359:SF5">
    <property type="entry name" value="CLAVATA3_ESR (CLE)-RELATED PROTEIN 9"/>
    <property type="match status" value="1"/>
</dbReference>
<protein>
    <recommendedName>
        <fullName evidence="10">CLAVATA3/ESR (CLE)-related protein 9</fullName>
    </recommendedName>
    <component>
        <recommendedName>
            <fullName evidence="10">CLE9p</fullName>
        </recommendedName>
    </component>
</protein>
<name>CLE9_ARATH</name>
<evidence type="ECO:0000250" key="1">
    <source>
        <dbReference type="UniProtKB" id="O49519"/>
    </source>
</evidence>
<evidence type="ECO:0000255" key="2"/>
<evidence type="ECO:0000255" key="3">
    <source>
        <dbReference type="PROSITE-ProRule" id="PRU00498"/>
    </source>
</evidence>
<evidence type="ECO:0000256" key="4">
    <source>
        <dbReference type="SAM" id="MobiDB-lite"/>
    </source>
</evidence>
<evidence type="ECO:0000269" key="5">
    <source>
    </source>
</evidence>
<evidence type="ECO:0000269" key="6">
    <source>
    </source>
</evidence>
<evidence type="ECO:0000269" key="7">
    <source>
    </source>
</evidence>
<evidence type="ECO:0000269" key="8">
    <source>
    </source>
</evidence>
<evidence type="ECO:0000269" key="9">
    <source>
    </source>
</evidence>
<evidence type="ECO:0000303" key="10">
    <source>
    </source>
</evidence>
<evidence type="ECO:0000305" key="11"/>
<evidence type="ECO:0000312" key="12">
    <source>
        <dbReference type="Araport" id="AT1G26600"/>
    </source>
</evidence>
<evidence type="ECO:0000312" key="13">
    <source>
        <dbReference type="EMBL" id="AAF98585.1"/>
    </source>
</evidence>
<gene>
    <name evidence="10" type="primary">CLE9</name>
    <name evidence="12" type="ordered locus">At1g26600</name>
    <name evidence="13" type="ORF">T1K7.3</name>
</gene>
<sequence>MTMTHLNRLILISLLFVSLLLKSSTASSTVVDEGNRTSRNFRYRTHRFVPRFNHHPYHVTPHRSCDSFIRPYARSMCIELQRIHRSSRKQPLLSPPPPEIDPRYGVDKRLVPSGPNPLHN</sequence>
<accession>Q9FZE4</accession>
<accession>Q8LCX2</accession>
<organism>
    <name type="scientific">Arabidopsis thaliana</name>
    <name type="common">Mouse-ear cress</name>
    <dbReference type="NCBI Taxonomy" id="3702"/>
    <lineage>
        <taxon>Eukaryota</taxon>
        <taxon>Viridiplantae</taxon>
        <taxon>Streptophyta</taxon>
        <taxon>Embryophyta</taxon>
        <taxon>Tracheophyta</taxon>
        <taxon>Spermatophyta</taxon>
        <taxon>Magnoliopsida</taxon>
        <taxon>eudicotyledons</taxon>
        <taxon>Gunneridae</taxon>
        <taxon>Pentapetalae</taxon>
        <taxon>rosids</taxon>
        <taxon>malvids</taxon>
        <taxon>Brassicales</taxon>
        <taxon>Brassicaceae</taxon>
        <taxon>Camelineae</taxon>
        <taxon>Arabidopsis</taxon>
    </lineage>
</organism>
<reference key="1">
    <citation type="journal article" date="2000" name="Nature">
        <title>Sequence and analysis of chromosome 1 of the plant Arabidopsis thaliana.</title>
        <authorList>
            <person name="Theologis A."/>
            <person name="Ecker J.R."/>
            <person name="Palm C.J."/>
            <person name="Federspiel N.A."/>
            <person name="Kaul S."/>
            <person name="White O."/>
            <person name="Alonso J."/>
            <person name="Altafi H."/>
            <person name="Araujo R."/>
            <person name="Bowman C.L."/>
            <person name="Brooks S.Y."/>
            <person name="Buehler E."/>
            <person name="Chan A."/>
            <person name="Chao Q."/>
            <person name="Chen H."/>
            <person name="Cheuk R.F."/>
            <person name="Chin C.W."/>
            <person name="Chung M.K."/>
            <person name="Conn L."/>
            <person name="Conway A.B."/>
            <person name="Conway A.R."/>
            <person name="Creasy T.H."/>
            <person name="Dewar K."/>
            <person name="Dunn P."/>
            <person name="Etgu P."/>
            <person name="Feldblyum T.V."/>
            <person name="Feng J.-D."/>
            <person name="Fong B."/>
            <person name="Fujii C.Y."/>
            <person name="Gill J.E."/>
            <person name="Goldsmith A.D."/>
            <person name="Haas B."/>
            <person name="Hansen N.F."/>
            <person name="Hughes B."/>
            <person name="Huizar L."/>
            <person name="Hunter J.L."/>
            <person name="Jenkins J."/>
            <person name="Johnson-Hopson C."/>
            <person name="Khan S."/>
            <person name="Khaykin E."/>
            <person name="Kim C.J."/>
            <person name="Koo H.L."/>
            <person name="Kremenetskaia I."/>
            <person name="Kurtz D.B."/>
            <person name="Kwan A."/>
            <person name="Lam B."/>
            <person name="Langin-Hooper S."/>
            <person name="Lee A."/>
            <person name="Lee J.M."/>
            <person name="Lenz C.A."/>
            <person name="Li J.H."/>
            <person name="Li Y.-P."/>
            <person name="Lin X."/>
            <person name="Liu S.X."/>
            <person name="Liu Z.A."/>
            <person name="Luros J.S."/>
            <person name="Maiti R."/>
            <person name="Marziali A."/>
            <person name="Militscher J."/>
            <person name="Miranda M."/>
            <person name="Nguyen M."/>
            <person name="Nierman W.C."/>
            <person name="Osborne B.I."/>
            <person name="Pai G."/>
            <person name="Peterson J."/>
            <person name="Pham P.K."/>
            <person name="Rizzo M."/>
            <person name="Rooney T."/>
            <person name="Rowley D."/>
            <person name="Sakano H."/>
            <person name="Salzberg S.L."/>
            <person name="Schwartz J.R."/>
            <person name="Shinn P."/>
            <person name="Southwick A.M."/>
            <person name="Sun H."/>
            <person name="Tallon L.J."/>
            <person name="Tambunga G."/>
            <person name="Toriumi M.J."/>
            <person name="Town C.D."/>
            <person name="Utterback T."/>
            <person name="Van Aken S."/>
            <person name="Vaysberg M."/>
            <person name="Vysotskaia V.S."/>
            <person name="Walker M."/>
            <person name="Wu D."/>
            <person name="Yu G."/>
            <person name="Fraser C.M."/>
            <person name="Venter J.C."/>
            <person name="Davis R.W."/>
        </authorList>
    </citation>
    <scope>NUCLEOTIDE SEQUENCE [LARGE SCALE GENOMIC DNA]</scope>
    <source>
        <strain>cv. Columbia</strain>
    </source>
</reference>
<reference key="2">
    <citation type="journal article" date="2017" name="Plant J.">
        <title>Araport11: a complete reannotation of the Arabidopsis thaliana reference genome.</title>
        <authorList>
            <person name="Cheng C.Y."/>
            <person name="Krishnakumar V."/>
            <person name="Chan A.P."/>
            <person name="Thibaud-Nissen F."/>
            <person name="Schobel S."/>
            <person name="Town C.D."/>
        </authorList>
    </citation>
    <scope>GENOME REANNOTATION</scope>
    <source>
        <strain>cv. Columbia</strain>
    </source>
</reference>
<reference key="3">
    <citation type="submission" date="2002-03" db="EMBL/GenBank/DDBJ databases">
        <title>Full-length cDNA from Arabidopsis thaliana.</title>
        <authorList>
            <person name="Brover V.V."/>
            <person name="Troukhan M.E."/>
            <person name="Alexandrov N.A."/>
            <person name="Lu Y.-P."/>
            <person name="Flavell R.B."/>
            <person name="Feldmann K.A."/>
        </authorList>
    </citation>
    <scope>NUCLEOTIDE SEQUENCE [LARGE SCALE MRNA]</scope>
    <source>
        <strain>cv. Columbia</strain>
    </source>
</reference>
<reference key="4">
    <citation type="journal article" date="2001" name="Plant Physiol.">
        <title>A large family of genes that share homology with CLAVATA3.</title>
        <authorList>
            <person name="Cock J.M."/>
            <person name="McCormick S."/>
        </authorList>
    </citation>
    <scope>GENE FAMILY</scope>
    <scope>NOMENCLATURE</scope>
</reference>
<reference key="5">
    <citation type="journal article" date="2003" name="Plant Mol. Biol.">
        <title>The Arabidopsis CLV3-like (CLE) genes are expressed in diverse tissues and encode secreted proteins.</title>
        <authorList>
            <person name="Sharma V.K."/>
            <person name="Ramirez J."/>
            <person name="Fletcher J.C."/>
        </authorList>
    </citation>
    <scope>SUBCELLULAR LOCATION</scope>
    <scope>TISSUE SPECIFICITY</scope>
</reference>
<reference key="6">
    <citation type="journal article" date="2006" name="Plant Physiol.">
        <title>Evidence for functional conservation, sufficiency, and proteolytic processing of the CLAVATA3 CLE domain.</title>
        <authorList>
            <person name="Ni J."/>
            <person name="Clark S.E."/>
        </authorList>
    </citation>
    <scope>FUNCTION</scope>
</reference>
<reference key="7">
    <citation type="journal article" date="2006" name="Plant Physiol.">
        <title>Gain-of-function phenotypes of many CLAVATA3/ESR genes, including four new family members, correlate with tandem variations in the conserved CLAVATA3/ESR domain.</title>
        <authorList>
            <person name="Strabala T.J."/>
            <person name="O'donnell P.J."/>
            <person name="Smit A.-M."/>
            <person name="Ampomah-Dwamena C."/>
            <person name="Martin E.J."/>
            <person name="Netzler N."/>
            <person name="Nieuwenhuizen N.J."/>
            <person name="Quinn B.D."/>
            <person name="Foote H.C.C."/>
            <person name="Hudson K.R."/>
        </authorList>
    </citation>
    <scope>FUNCTION</scope>
    <scope>GENE FAMILY</scope>
</reference>
<reference key="8">
    <citation type="journal article" date="2006" name="Science">
        <title>Dodeca-CLE peptides as suppressors of plant stem cell differentiation.</title>
        <authorList>
            <person name="Ito Y."/>
            <person name="Nakanomyo I."/>
            <person name="Motose H."/>
            <person name="Iwamoto K."/>
            <person name="Sawa S."/>
            <person name="Dohmae N."/>
            <person name="Fukuda H."/>
        </authorList>
    </citation>
    <scope>FUNCTION</scope>
</reference>
<reference key="9">
    <citation type="journal article" date="2008" name="Cell. Mol. Life Sci.">
        <title>The CLE family of plant polypeptide signaling molecules.</title>
        <authorList>
            <person name="Jun J.H."/>
            <person name="Fiume E."/>
            <person name="Fletcher J.C."/>
        </authorList>
    </citation>
    <scope>REVIEW</scope>
</reference>
<reference key="10">
    <citation type="journal article" date="2008" name="Curr. Opin. Plant Biol.">
        <title>Diverse and conserved roles of CLE peptides.</title>
        <authorList>
            <person name="Mitchum M.G."/>
            <person name="Wang X."/>
            <person name="Davis E.L."/>
        </authorList>
    </citation>
    <scope>REVIEW</scope>
</reference>
<reference key="11">
    <citation type="journal article" date="2010" name="Protoplasma">
        <title>CLE peptide signaling during plant development.</title>
        <authorList>
            <person name="Wang G."/>
            <person name="Fiers M."/>
        </authorList>
    </citation>
    <scope>REVIEW</scope>
</reference>
<reference key="12">
    <citation type="journal article" date="2017" name="EMBO Rep.">
        <title>Perception of root-active CLE peptides requires CORYNE function in the phloem vasculature.</title>
        <authorList>
            <person name="Hazak O."/>
            <person name="Brandt B."/>
            <person name="Cattaneo P."/>
            <person name="Santiago J."/>
            <person name="Rodriguez-Villalon A."/>
            <person name="Hothorn M."/>
            <person name="Hardtke C.S."/>
        </authorList>
    </citation>
    <scope>FUNCTION</scope>
    <source>
        <strain>cv. Columbia</strain>
    </source>
</reference>
<feature type="signal peptide" evidence="2">
    <location>
        <begin position="1"/>
        <end position="26"/>
    </location>
</feature>
<feature type="chain" id="PRO_0000401249" description="CLAVATA3/ESR (CLE)-related protein 9">
    <location>
        <begin position="27"/>
        <end position="120"/>
    </location>
</feature>
<feature type="peptide" id="PRO_0000401250" description="CLE9p" evidence="1">
    <location>
        <begin position="109"/>
        <end position="120"/>
    </location>
</feature>
<feature type="region of interest" description="Disordered" evidence="4">
    <location>
        <begin position="85"/>
        <end position="120"/>
    </location>
</feature>
<feature type="compositionally biased region" description="Basic and acidic residues" evidence="4">
    <location>
        <begin position="100"/>
        <end position="110"/>
    </location>
</feature>
<feature type="modified residue" description="Hydroxyproline" evidence="1">
    <location>
        <position position="112"/>
    </location>
</feature>
<feature type="modified residue" description="Hydroxyproline" evidence="1">
    <location>
        <position position="115"/>
    </location>
</feature>
<feature type="glycosylation site" description="N-linked (GlcNAc...) asparagine" evidence="3">
    <location>
        <position position="35"/>
    </location>
</feature>
<feature type="glycosylation site" description="O-linked (Ara...) hydroxyproline" evidence="1">
    <location>
        <position position="115"/>
    </location>
</feature>
<feature type="sequence conflict" description="In Ref. 3; AAM64423." evidence="11" ref="3">
    <original>S</original>
    <variation>F</variation>
    <location>
        <position position="94"/>
    </location>
</feature>
<keyword id="KW-0002">3D-structure</keyword>
<keyword id="KW-0217">Developmental protein</keyword>
<keyword id="KW-0221">Differentiation</keyword>
<keyword id="KW-0325">Glycoprotein</keyword>
<keyword id="KW-0379">Hydroxylation</keyword>
<keyword id="KW-1185">Reference proteome</keyword>
<keyword id="KW-0964">Secreted</keyword>
<keyword id="KW-0732">Signal</keyword>
<proteinExistence type="evidence at protein level"/>